<name>PAN3_CANAL</name>
<gene>
    <name evidence="1" type="primary">PAN3</name>
    <name type="ordered locus">CAALFM_C505170WA</name>
    <name type="ORF">CaO19.11493</name>
    <name type="ORF">CaO19.4010</name>
</gene>
<comment type="function">
    <text evidence="1">Regulatory subunit of the poly(A)-nuclease (PAN) deadenylation complex, one of two cytoplasmic mRNA deadenylases involved in mRNA turnover. PAN specifically shortens poly(A) tails of RNA and the activity is stimulated by poly(A)-binding protein PAB1. PAN deadenylation is followed by rapid degradation of the shortened mRNA tails by the CCR4-NOT complex. Deadenylated mRNAs are then degraded by two alternative mechanisms, namely exosome-mediated 3'-5' exonucleolytic degradation, or deadenylation-dependent mRNA decaping and subsequent 5'-3' exonucleolytic degradation by XRN1. May also be involved in post-transcriptional maturation of mRNA poly(A) tails. PAN3 acts as a positive regulator for PAN activity, recruiting the catalytic subunit PAN2 to mRNA via its interaction with RNA and with PAB1.</text>
</comment>
<comment type="subunit">
    <text evidence="1">Homodimer. Forms a heterotrimer with a catalytic subunit PAN2 to form the poly(A)-nuclease (PAN) deadenylation complex. Interacts (via PAM-2 motif) with poly(A)-binding protein PAB1 (via PABC domain), conferring substrate specificity of the enzyme complex.</text>
</comment>
<comment type="subcellular location">
    <subcellularLocation>
        <location evidence="1">Cytoplasm</location>
    </subcellularLocation>
</comment>
<comment type="domain">
    <text evidence="1">The N-terminal zinc finger binds to poly(A) RNA.</text>
</comment>
<comment type="domain">
    <text evidence="1">Contains a pseudokinase domain. The protein kinase domain is predicted to be catalytically inactive because some of the residues important for catalytic activity are substituted and it lacks the equivalent of the binding site for a peptide substrate. However, it has retained an ATP-binding site and ATP-binding is required for mRNA degradation, stimulating the activity of the PAN2 nuclease in vitro. The nucleotide-binding site is juxtaposed to the RNase active site of PAN2 in the complex and may actually bind nucleosides of a poly(A) RNA rather than ATP, feeding the poly(A)-tail to the active site of the deadenylase and thus increasing the efficiency with which this distributive enzyme degrades oligo(A) RNAs.</text>
</comment>
<comment type="domain">
    <text evidence="1">The pseudokinase domain, the coiled-coil (CC), and C-terminal knob domain (CK) form a structural unit (PKC) that forms an extensive high-affinity interaction surface for PAN2.</text>
</comment>
<comment type="similarity">
    <text evidence="1">Belongs to the protein kinase superfamily. PAN3 family.</text>
</comment>
<keyword id="KW-0067">ATP-binding</keyword>
<keyword id="KW-0175">Coiled coil</keyword>
<keyword id="KW-0963">Cytoplasm</keyword>
<keyword id="KW-0479">Metal-binding</keyword>
<keyword id="KW-0507">mRNA processing</keyword>
<keyword id="KW-0547">Nucleotide-binding</keyword>
<keyword id="KW-1185">Reference proteome</keyword>
<keyword id="KW-0862">Zinc</keyword>
<keyword id="KW-0863">Zinc-finger</keyword>
<dbReference type="EMBL" id="CP017627">
    <property type="protein sequence ID" value="AOW29921.1"/>
    <property type="molecule type" value="Genomic_DNA"/>
</dbReference>
<dbReference type="RefSeq" id="XP_721918.2">
    <property type="nucleotide sequence ID" value="XM_716825.2"/>
</dbReference>
<dbReference type="SMR" id="Q5AK10"/>
<dbReference type="BioGRID" id="1219427">
    <property type="interactions" value="1"/>
</dbReference>
<dbReference type="FunCoup" id="Q5AK10">
    <property type="interactions" value="675"/>
</dbReference>
<dbReference type="STRING" id="237561.Q5AK10"/>
<dbReference type="PeptideAtlas" id="Q5AK10"/>
<dbReference type="EnsemblFungi" id="C5_05170W_A-T">
    <property type="protein sequence ID" value="C5_05170W_A-T-p1"/>
    <property type="gene ID" value="C5_05170W_A"/>
</dbReference>
<dbReference type="GeneID" id="3636464"/>
<dbReference type="KEGG" id="cal:CAALFM_C505170WA"/>
<dbReference type="CGD" id="CAL0000174293">
    <property type="gene designation" value="PAN3"/>
</dbReference>
<dbReference type="VEuPathDB" id="FungiDB:C5_05170W_A"/>
<dbReference type="eggNOG" id="KOG3741">
    <property type="taxonomic scope" value="Eukaryota"/>
</dbReference>
<dbReference type="HOGENOM" id="CLU_016423_1_0_1"/>
<dbReference type="InParanoid" id="Q5AK10"/>
<dbReference type="OrthoDB" id="204958at2759"/>
<dbReference type="PRO" id="PR:Q5AK10"/>
<dbReference type="Proteomes" id="UP000000559">
    <property type="component" value="Chromosome 5"/>
</dbReference>
<dbReference type="GO" id="GO:0000932">
    <property type="term" value="C:P-body"/>
    <property type="evidence" value="ECO:0000318"/>
    <property type="project" value="GO_Central"/>
</dbReference>
<dbReference type="GO" id="GO:0031251">
    <property type="term" value="C:PAN complex"/>
    <property type="evidence" value="ECO:0000318"/>
    <property type="project" value="GO_Central"/>
</dbReference>
<dbReference type="GO" id="GO:0005524">
    <property type="term" value="F:ATP binding"/>
    <property type="evidence" value="ECO:0007669"/>
    <property type="project" value="UniProtKB-UniRule"/>
</dbReference>
<dbReference type="GO" id="GO:0008143">
    <property type="term" value="F:poly(A) binding"/>
    <property type="evidence" value="ECO:0000318"/>
    <property type="project" value="GO_Central"/>
</dbReference>
<dbReference type="GO" id="GO:0004672">
    <property type="term" value="F:protein kinase activity"/>
    <property type="evidence" value="ECO:0007669"/>
    <property type="project" value="InterPro"/>
</dbReference>
<dbReference type="GO" id="GO:0008270">
    <property type="term" value="F:zinc ion binding"/>
    <property type="evidence" value="ECO:0007669"/>
    <property type="project" value="UniProtKB-KW"/>
</dbReference>
<dbReference type="GO" id="GO:0006397">
    <property type="term" value="P:mRNA processing"/>
    <property type="evidence" value="ECO:0007669"/>
    <property type="project" value="UniProtKB-KW"/>
</dbReference>
<dbReference type="GO" id="GO:0000289">
    <property type="term" value="P:nuclear-transcribed mRNA poly(A) tail shortening"/>
    <property type="evidence" value="ECO:0000318"/>
    <property type="project" value="GO_Central"/>
</dbReference>
<dbReference type="FunFam" id="1.10.510.10:FF:001869">
    <property type="entry name" value="PAN2-PAN3 deadenylation complex subunit PAN3"/>
    <property type="match status" value="1"/>
</dbReference>
<dbReference type="Gene3D" id="1.10.287.3700">
    <property type="match status" value="1"/>
</dbReference>
<dbReference type="Gene3D" id="1.20.5.5160">
    <property type="match status" value="1"/>
</dbReference>
<dbReference type="Gene3D" id="6.10.250.3160">
    <property type="match status" value="1"/>
</dbReference>
<dbReference type="Gene3D" id="1.10.510.10">
    <property type="entry name" value="Transferase(Phosphotransferase) domain 1"/>
    <property type="match status" value="1"/>
</dbReference>
<dbReference type="HAMAP" id="MF_03181">
    <property type="entry name" value="PAN3"/>
    <property type="match status" value="1"/>
</dbReference>
<dbReference type="InterPro" id="IPR011009">
    <property type="entry name" value="Kinase-like_dom_sf"/>
</dbReference>
<dbReference type="InterPro" id="IPR030844">
    <property type="entry name" value="PAN3"/>
</dbReference>
<dbReference type="InterPro" id="IPR041332">
    <property type="entry name" value="Pan3_PK"/>
</dbReference>
<dbReference type="InterPro" id="IPR000719">
    <property type="entry name" value="Prot_kinase_dom"/>
</dbReference>
<dbReference type="InterPro" id="IPR000571">
    <property type="entry name" value="Znf_CCCH"/>
</dbReference>
<dbReference type="PANTHER" id="PTHR12272">
    <property type="entry name" value="DEADENYLATION COMPLEX SUBUNIT PAN3"/>
    <property type="match status" value="1"/>
</dbReference>
<dbReference type="PANTHER" id="PTHR12272:SF11">
    <property type="entry name" value="PAN2-PAN3 DEADENYLATION COMPLEX SUBUNIT PAN3"/>
    <property type="match status" value="1"/>
</dbReference>
<dbReference type="Pfam" id="PF18101">
    <property type="entry name" value="Pan3_PK"/>
    <property type="match status" value="1"/>
</dbReference>
<dbReference type="SMART" id="SM00220">
    <property type="entry name" value="S_TKc"/>
    <property type="match status" value="1"/>
</dbReference>
<dbReference type="SUPFAM" id="SSF56112">
    <property type="entry name" value="Protein kinase-like (PK-like)"/>
    <property type="match status" value="1"/>
</dbReference>
<dbReference type="PROSITE" id="PS50011">
    <property type="entry name" value="PROTEIN_KINASE_DOM"/>
    <property type="match status" value="1"/>
</dbReference>
<dbReference type="PROSITE" id="PS50103">
    <property type="entry name" value="ZF_C3H1"/>
    <property type="match status" value="1"/>
</dbReference>
<protein>
    <recommendedName>
        <fullName evidence="1">PAN2-PAN3 deadenylation complex subunit PAN3</fullName>
    </recommendedName>
    <alternativeName>
        <fullName evidence="1">PAB1P-dependent poly(A)-specific ribonuclease</fullName>
    </alternativeName>
    <alternativeName>
        <fullName evidence="1">Poly(A)-nuclease deadenylation complex subunit 3</fullName>
        <shortName evidence="1">PAN deadenylation complex subunit 3</shortName>
    </alternativeName>
</protein>
<evidence type="ECO:0000255" key="1">
    <source>
        <dbReference type="HAMAP-Rule" id="MF_03181"/>
    </source>
</evidence>
<evidence type="ECO:0000256" key="2">
    <source>
        <dbReference type="SAM" id="MobiDB-lite"/>
    </source>
</evidence>
<evidence type="ECO:0000305" key="3"/>
<feature type="chain" id="PRO_0000295362" description="PAN2-PAN3 deadenylation complex subunit PAN3">
    <location>
        <begin position="1"/>
        <end position="697"/>
    </location>
</feature>
<feature type="zinc finger region" description="C3H1-type" evidence="1">
    <location>
        <begin position="7"/>
        <end position="36"/>
    </location>
</feature>
<feature type="region of interest" description="Disordered" evidence="2">
    <location>
        <begin position="40"/>
        <end position="67"/>
    </location>
</feature>
<feature type="region of interest" description="Disordered" evidence="2">
    <location>
        <begin position="106"/>
        <end position="240"/>
    </location>
</feature>
<feature type="region of interest" description="Pseudokinase domain" evidence="1">
    <location>
        <begin position="308"/>
        <end position="576"/>
    </location>
</feature>
<feature type="region of interest" description="Knob domain" evidence="1">
    <location>
        <begin position="616"/>
        <end position="697"/>
    </location>
</feature>
<feature type="coiled-coil region" evidence="1">
    <location>
        <begin position="577"/>
        <end position="615"/>
    </location>
</feature>
<feature type="short sequence motif" description="PABPC-interacting motif-2 (PAM-2)" evidence="3">
    <location>
        <begin position="69"/>
        <end position="89"/>
    </location>
</feature>
<feature type="short sequence motif" description="PABPC-interacting motif-2 (PAM-2)" evidence="3">
    <location>
        <begin position="106"/>
        <end position="126"/>
    </location>
</feature>
<feature type="compositionally biased region" description="Polar residues" evidence="2">
    <location>
        <begin position="119"/>
        <end position="153"/>
    </location>
</feature>
<feature type="compositionally biased region" description="Low complexity" evidence="2">
    <location>
        <begin position="172"/>
        <end position="187"/>
    </location>
</feature>
<feature type="compositionally biased region" description="Polar residues" evidence="2">
    <location>
        <begin position="212"/>
        <end position="224"/>
    </location>
</feature>
<feature type="binding site" evidence="1">
    <location>
        <position position="361"/>
    </location>
    <ligand>
        <name>ATP</name>
        <dbReference type="ChEBI" id="CHEBI:30616"/>
    </ligand>
</feature>
<feature type="binding site" evidence="1">
    <location>
        <begin position="416"/>
        <end position="423"/>
    </location>
    <ligand>
        <name>ATP</name>
        <dbReference type="ChEBI" id="CHEBI:30616"/>
    </ligand>
</feature>
<feature type="binding site" evidence="1">
    <location>
        <begin position="470"/>
        <end position="471"/>
    </location>
    <ligand>
        <name>ATP</name>
        <dbReference type="ChEBI" id="CHEBI:30616"/>
    </ligand>
</feature>
<proteinExistence type="inferred from homology"/>
<reference key="1">
    <citation type="journal article" date="2004" name="Proc. Natl. Acad. Sci. U.S.A.">
        <title>The diploid genome sequence of Candida albicans.</title>
        <authorList>
            <person name="Jones T."/>
            <person name="Federspiel N.A."/>
            <person name="Chibana H."/>
            <person name="Dungan J."/>
            <person name="Kalman S."/>
            <person name="Magee B.B."/>
            <person name="Newport G."/>
            <person name="Thorstenson Y.R."/>
            <person name="Agabian N."/>
            <person name="Magee P.T."/>
            <person name="Davis R.W."/>
            <person name="Scherer S."/>
        </authorList>
    </citation>
    <scope>NUCLEOTIDE SEQUENCE [LARGE SCALE GENOMIC DNA]</scope>
    <source>
        <strain>SC5314 / ATCC MYA-2876</strain>
    </source>
</reference>
<reference key="2">
    <citation type="journal article" date="2007" name="Genome Biol.">
        <title>Assembly of the Candida albicans genome into sixteen supercontigs aligned on the eight chromosomes.</title>
        <authorList>
            <person name="van het Hoog M."/>
            <person name="Rast T.J."/>
            <person name="Martchenko M."/>
            <person name="Grindle S."/>
            <person name="Dignard D."/>
            <person name="Hogues H."/>
            <person name="Cuomo C."/>
            <person name="Berriman M."/>
            <person name="Scherer S."/>
            <person name="Magee B.B."/>
            <person name="Whiteway M."/>
            <person name="Chibana H."/>
            <person name="Nantel A."/>
            <person name="Magee P.T."/>
        </authorList>
    </citation>
    <scope>GENOME REANNOTATION</scope>
    <source>
        <strain>SC5314 / ATCC MYA-2876</strain>
    </source>
</reference>
<reference key="3">
    <citation type="journal article" date="2013" name="Genome Biol.">
        <title>Assembly of a phased diploid Candida albicans genome facilitates allele-specific measurements and provides a simple model for repeat and indel structure.</title>
        <authorList>
            <person name="Muzzey D."/>
            <person name="Schwartz K."/>
            <person name="Weissman J.S."/>
            <person name="Sherlock G."/>
        </authorList>
    </citation>
    <scope>NUCLEOTIDE SEQUENCE [LARGE SCALE GENOMIC DNA]</scope>
    <scope>GENOME REANNOTATION</scope>
    <source>
        <strain>SC5314 / ATCC MYA-2876</strain>
    </source>
</reference>
<sequence>MNINLDTAKDTLCKNILIYGYCKYENKGCAFSHNRQQPAQQQQATNTSNNSTSVITPNSANSTASSADLSSKKKFNLNTPSFQPSVSNLSNKFSTLSPKLKEIPVFKPENGVSEPDTVDSPTTQRPFTSKRFNVSTPSFTPTNFDFANNSNADGNRGGASTPIGISSAPLVQNQQQQQQQQQQQQKQPLAVPSPLASGAQPPTMQHRILSMGVSQSSPSTNPYFANNLDMSAPTPGSETPGPVLPGSAGAAAAAANQPMYPLQYHLYAPAPPPRLTIPLQPYETNSQAMFIPNDLREYLHKKNEASLQSLSHSNLPEHVNQYHSLVPIDKSYEPVSKLWLGKNSLIFKCLDNIDGNLYVMRKIEPCNEIINEKPFKTIKRWKSIKNANIVGLQDAFTTMAFNGNQSGNTSLCIIYDYYPNSISLLEHHKKGLRVEPVNEALLWNYLIQLINAIMAIHEKGLSASSTIDLSKIIVTNKNRIKLSSVGISDILEFKDDETNQDIKIRQLQDIQKVGKVLMELAILLLPVNMRQSNNIYNSLKASTNLSEEIINNLQELNDLDTASGEFDLNEFSQRLTPKMFNIIDSLQNSSDFIEGQLTSELENARLFRLMTKLNYLIHDNSNSENDKIIKLFLNYVYNCYDSNNKKVINLNKVLINLNKLDCGIDEKILLVNNDECIIISYKELKEIIDTKFRLMRE</sequence>
<accession>Q5AK10</accession>
<accession>A0A1D8PP56</accession>
<organism>
    <name type="scientific">Candida albicans (strain SC5314 / ATCC MYA-2876)</name>
    <name type="common">Yeast</name>
    <dbReference type="NCBI Taxonomy" id="237561"/>
    <lineage>
        <taxon>Eukaryota</taxon>
        <taxon>Fungi</taxon>
        <taxon>Dikarya</taxon>
        <taxon>Ascomycota</taxon>
        <taxon>Saccharomycotina</taxon>
        <taxon>Pichiomycetes</taxon>
        <taxon>Debaryomycetaceae</taxon>
        <taxon>Candida/Lodderomyces clade</taxon>
        <taxon>Candida</taxon>
    </lineage>
</organism>